<name>DCD_PYRAE</name>
<evidence type="ECO:0000255" key="1">
    <source>
        <dbReference type="HAMAP-Rule" id="MF_00146"/>
    </source>
</evidence>
<sequence>MILANDELKKLISTGRLKVDPLYPDTIRENGLDLRIGGEYAIYAYEGVVIKPCELESARHLFRVVKADEVVIPPRNFALLTTEEYVKMPDDVVGFANLRSTLARYGLVIPPTIVDAGFEGNITIEVVNETPNTIVLRRGMRFLHLVLAKTEGRAQYSGLYQGQRGVTPPKGLKNEC</sequence>
<accession>Q8ZW23</accession>
<reference key="1">
    <citation type="journal article" date="2002" name="Proc. Natl. Acad. Sci. U.S.A.">
        <title>Genome sequence of the hyperthermophilic crenarchaeon Pyrobaculum aerophilum.</title>
        <authorList>
            <person name="Fitz-Gibbon S.T."/>
            <person name="Ladner H."/>
            <person name="Kim U.-J."/>
            <person name="Stetter K.O."/>
            <person name="Simon M.I."/>
            <person name="Miller J.H."/>
        </authorList>
    </citation>
    <scope>NUCLEOTIDE SEQUENCE [LARGE SCALE GENOMIC DNA]</scope>
    <source>
        <strain>ATCC 51768 / DSM 7523 / JCM 9630 / CIP 104966 / NBRC 100827 / IM2</strain>
    </source>
</reference>
<gene>
    <name evidence="1" type="primary">dcd</name>
    <name type="ordered locus">PAE2008</name>
</gene>
<proteinExistence type="inferred from homology"/>
<organism>
    <name type="scientific">Pyrobaculum aerophilum (strain ATCC 51768 / DSM 7523 / JCM 9630 / CIP 104966 / NBRC 100827 / IM2)</name>
    <dbReference type="NCBI Taxonomy" id="178306"/>
    <lineage>
        <taxon>Archaea</taxon>
        <taxon>Thermoproteota</taxon>
        <taxon>Thermoprotei</taxon>
        <taxon>Thermoproteales</taxon>
        <taxon>Thermoproteaceae</taxon>
        <taxon>Pyrobaculum</taxon>
    </lineage>
</organism>
<comment type="function">
    <text evidence="1">Catalyzes the deamination of dCTP to dUTP.</text>
</comment>
<comment type="catalytic activity">
    <reaction evidence="1">
        <text>dCTP + H2O + H(+) = dUTP + NH4(+)</text>
        <dbReference type="Rhea" id="RHEA:22680"/>
        <dbReference type="ChEBI" id="CHEBI:15377"/>
        <dbReference type="ChEBI" id="CHEBI:15378"/>
        <dbReference type="ChEBI" id="CHEBI:28938"/>
        <dbReference type="ChEBI" id="CHEBI:61481"/>
        <dbReference type="ChEBI" id="CHEBI:61555"/>
        <dbReference type="EC" id="3.5.4.13"/>
    </reaction>
</comment>
<comment type="pathway">
    <text evidence="1">Pyrimidine metabolism; dUMP biosynthesis; dUMP from dCTP (dUTP route): step 1/2.</text>
</comment>
<comment type="subunit">
    <text evidence="1">Homotrimer.</text>
</comment>
<comment type="similarity">
    <text evidence="1">Belongs to the dCTP deaminase family.</text>
</comment>
<feature type="chain" id="PRO_0000156035" description="dCTP deaminase">
    <location>
        <begin position="1"/>
        <end position="176"/>
    </location>
</feature>
<feature type="active site" description="Proton donor/acceptor" evidence="1">
    <location>
        <position position="125"/>
    </location>
</feature>
<feature type="binding site" evidence="1">
    <location>
        <begin position="99"/>
        <end position="104"/>
    </location>
    <ligand>
        <name>dCTP</name>
        <dbReference type="ChEBI" id="CHEBI:61481"/>
    </ligand>
</feature>
<feature type="binding site" evidence="1">
    <location>
        <position position="115"/>
    </location>
    <ligand>
        <name>dCTP</name>
        <dbReference type="ChEBI" id="CHEBI:61481"/>
    </ligand>
</feature>
<feature type="binding site" evidence="1">
    <location>
        <position position="163"/>
    </location>
    <ligand>
        <name>dCTP</name>
        <dbReference type="ChEBI" id="CHEBI:61481"/>
    </ligand>
</feature>
<protein>
    <recommendedName>
        <fullName evidence="1">dCTP deaminase</fullName>
        <ecNumber evidence="1">3.5.4.13</ecNumber>
    </recommendedName>
    <alternativeName>
        <fullName evidence="1">Deoxycytidine triphosphate deaminase</fullName>
    </alternativeName>
</protein>
<keyword id="KW-0378">Hydrolase</keyword>
<keyword id="KW-0546">Nucleotide metabolism</keyword>
<keyword id="KW-0547">Nucleotide-binding</keyword>
<keyword id="KW-1185">Reference proteome</keyword>
<dbReference type="EC" id="3.5.4.13" evidence="1"/>
<dbReference type="EMBL" id="AE009441">
    <property type="protein sequence ID" value="AAL63879.1"/>
    <property type="molecule type" value="Genomic_DNA"/>
</dbReference>
<dbReference type="RefSeq" id="WP_011008350.1">
    <property type="nucleotide sequence ID" value="NC_003364.1"/>
</dbReference>
<dbReference type="SMR" id="Q8ZW23"/>
<dbReference type="FunCoup" id="Q8ZW23">
    <property type="interactions" value="16"/>
</dbReference>
<dbReference type="STRING" id="178306.PAE2008"/>
<dbReference type="EnsemblBacteria" id="AAL63879">
    <property type="protein sequence ID" value="AAL63879"/>
    <property type="gene ID" value="PAE2008"/>
</dbReference>
<dbReference type="GeneID" id="1464202"/>
<dbReference type="KEGG" id="pai:PAE2008"/>
<dbReference type="PATRIC" id="fig|178306.9.peg.1484"/>
<dbReference type="eggNOG" id="arCOG04048">
    <property type="taxonomic scope" value="Archaea"/>
</dbReference>
<dbReference type="HOGENOM" id="CLU_087476_3_0_2"/>
<dbReference type="InParanoid" id="Q8ZW23"/>
<dbReference type="UniPathway" id="UPA00610">
    <property type="reaction ID" value="UER00665"/>
</dbReference>
<dbReference type="Proteomes" id="UP000002439">
    <property type="component" value="Chromosome"/>
</dbReference>
<dbReference type="GO" id="GO:0008829">
    <property type="term" value="F:dCTP deaminase activity"/>
    <property type="evidence" value="ECO:0007669"/>
    <property type="project" value="UniProtKB-UniRule"/>
</dbReference>
<dbReference type="GO" id="GO:0000166">
    <property type="term" value="F:nucleotide binding"/>
    <property type="evidence" value="ECO:0007669"/>
    <property type="project" value="UniProtKB-KW"/>
</dbReference>
<dbReference type="GO" id="GO:0006226">
    <property type="term" value="P:dUMP biosynthetic process"/>
    <property type="evidence" value="ECO:0007669"/>
    <property type="project" value="UniProtKB-UniPathway"/>
</dbReference>
<dbReference type="GO" id="GO:0006229">
    <property type="term" value="P:dUTP biosynthetic process"/>
    <property type="evidence" value="ECO:0007669"/>
    <property type="project" value="UniProtKB-UniRule"/>
</dbReference>
<dbReference type="CDD" id="cd07557">
    <property type="entry name" value="trimeric_dUTPase"/>
    <property type="match status" value="1"/>
</dbReference>
<dbReference type="Gene3D" id="2.70.40.10">
    <property type="match status" value="1"/>
</dbReference>
<dbReference type="HAMAP" id="MF_00146">
    <property type="entry name" value="dCTP_deaminase"/>
    <property type="match status" value="1"/>
</dbReference>
<dbReference type="InterPro" id="IPR011962">
    <property type="entry name" value="dCTP_deaminase"/>
</dbReference>
<dbReference type="InterPro" id="IPR036157">
    <property type="entry name" value="dUTPase-like_sf"/>
</dbReference>
<dbReference type="InterPro" id="IPR033704">
    <property type="entry name" value="dUTPase_trimeric"/>
</dbReference>
<dbReference type="NCBIfam" id="TIGR02274">
    <property type="entry name" value="dCTP_deam"/>
    <property type="match status" value="1"/>
</dbReference>
<dbReference type="PANTHER" id="PTHR42680">
    <property type="entry name" value="DCTP DEAMINASE"/>
    <property type="match status" value="1"/>
</dbReference>
<dbReference type="PANTHER" id="PTHR42680:SF3">
    <property type="entry name" value="DCTP DEAMINASE"/>
    <property type="match status" value="1"/>
</dbReference>
<dbReference type="Pfam" id="PF22769">
    <property type="entry name" value="DCD"/>
    <property type="match status" value="1"/>
</dbReference>
<dbReference type="SUPFAM" id="SSF51283">
    <property type="entry name" value="dUTPase-like"/>
    <property type="match status" value="1"/>
</dbReference>